<organism>
    <name type="scientific">Yersinia pestis bv. Antiqua (strain Nepal516)</name>
    <dbReference type="NCBI Taxonomy" id="377628"/>
    <lineage>
        <taxon>Bacteria</taxon>
        <taxon>Pseudomonadati</taxon>
        <taxon>Pseudomonadota</taxon>
        <taxon>Gammaproteobacteria</taxon>
        <taxon>Enterobacterales</taxon>
        <taxon>Yersiniaceae</taxon>
        <taxon>Yersinia</taxon>
    </lineage>
</organism>
<protein>
    <recommendedName>
        <fullName evidence="1">D-erythrose-4-phosphate dehydrogenase</fullName>
        <shortName evidence="1">E4PDH</shortName>
        <ecNumber evidence="1">1.2.1.72</ecNumber>
    </recommendedName>
</protein>
<proteinExistence type="inferred from homology"/>
<evidence type="ECO:0000255" key="1">
    <source>
        <dbReference type="HAMAP-Rule" id="MF_01640"/>
    </source>
</evidence>
<name>E4PD_YERPN</name>
<gene>
    <name evidence="1" type="primary">epd</name>
    <name type="ordered locus">YPN_3121</name>
    <name type="ORF">YP516_3543</name>
</gene>
<feature type="chain" id="PRO_0000293181" description="D-erythrose-4-phosphate dehydrogenase">
    <location>
        <begin position="1"/>
        <end position="338"/>
    </location>
</feature>
<feature type="active site" description="Nucleophile" evidence="1">
    <location>
        <position position="155"/>
    </location>
</feature>
<feature type="binding site" evidence="1">
    <location>
        <begin position="12"/>
        <end position="13"/>
    </location>
    <ligand>
        <name>NAD(+)</name>
        <dbReference type="ChEBI" id="CHEBI:57540"/>
    </ligand>
</feature>
<feature type="binding site" evidence="1">
    <location>
        <begin position="154"/>
        <end position="156"/>
    </location>
    <ligand>
        <name>substrate</name>
    </ligand>
</feature>
<feature type="binding site" evidence="1">
    <location>
        <position position="200"/>
    </location>
    <ligand>
        <name>substrate</name>
    </ligand>
</feature>
<feature type="binding site" evidence="1">
    <location>
        <begin position="213"/>
        <end position="214"/>
    </location>
    <ligand>
        <name>substrate</name>
    </ligand>
</feature>
<feature type="binding site" evidence="1">
    <location>
        <position position="236"/>
    </location>
    <ligand>
        <name>substrate</name>
    </ligand>
</feature>
<feature type="binding site" evidence="1">
    <location>
        <position position="318"/>
    </location>
    <ligand>
        <name>NAD(+)</name>
        <dbReference type="ChEBI" id="CHEBI:57540"/>
    </ligand>
</feature>
<feature type="site" description="Activates thiol group during catalysis" evidence="1">
    <location>
        <position position="182"/>
    </location>
</feature>
<reference key="1">
    <citation type="journal article" date="2006" name="J. Bacteriol.">
        <title>Complete genome sequence of Yersinia pestis strains Antiqua and Nepal516: evidence of gene reduction in an emerging pathogen.</title>
        <authorList>
            <person name="Chain P.S.G."/>
            <person name="Hu P."/>
            <person name="Malfatti S.A."/>
            <person name="Radnedge L."/>
            <person name="Larimer F."/>
            <person name="Vergez L.M."/>
            <person name="Worsham P."/>
            <person name="Chu M.C."/>
            <person name="Andersen G.L."/>
        </authorList>
    </citation>
    <scope>NUCLEOTIDE SEQUENCE [LARGE SCALE GENOMIC DNA]</scope>
    <source>
        <strain>Nepal516</strain>
    </source>
</reference>
<reference key="2">
    <citation type="submission" date="2009-04" db="EMBL/GenBank/DDBJ databases">
        <title>Yersinia pestis Nepal516A whole genome shotgun sequencing project.</title>
        <authorList>
            <person name="Plunkett G. III"/>
            <person name="Anderson B.D."/>
            <person name="Baumler D.J."/>
            <person name="Burland V."/>
            <person name="Cabot E.L."/>
            <person name="Glasner J.D."/>
            <person name="Mau B."/>
            <person name="Neeno-Eckwall E."/>
            <person name="Perna N.T."/>
            <person name="Munk A.C."/>
            <person name="Tapia R."/>
            <person name="Green L.D."/>
            <person name="Rogers Y.C."/>
            <person name="Detter J.C."/>
            <person name="Bruce D.C."/>
            <person name="Brettin T.S."/>
        </authorList>
    </citation>
    <scope>NUCLEOTIDE SEQUENCE [LARGE SCALE GENOMIC DNA]</scope>
    <source>
        <strain>Nepal516</strain>
    </source>
</reference>
<keyword id="KW-0963">Cytoplasm</keyword>
<keyword id="KW-0520">NAD</keyword>
<keyword id="KW-0560">Oxidoreductase</keyword>
<keyword id="KW-0664">Pyridoxine biosynthesis</keyword>
<dbReference type="EC" id="1.2.1.72" evidence="1"/>
<dbReference type="EMBL" id="CP000305">
    <property type="protein sequence ID" value="ABG19448.1"/>
    <property type="molecule type" value="Genomic_DNA"/>
</dbReference>
<dbReference type="EMBL" id="ACNQ01000017">
    <property type="protein sequence ID" value="EEO75613.1"/>
    <property type="molecule type" value="Genomic_DNA"/>
</dbReference>
<dbReference type="RefSeq" id="WP_002209964.1">
    <property type="nucleotide sequence ID" value="NZ_ACNQ01000017.1"/>
</dbReference>
<dbReference type="SMR" id="Q1CEY2"/>
<dbReference type="GeneID" id="57973718"/>
<dbReference type="KEGG" id="ypn:YPN_3121"/>
<dbReference type="HOGENOM" id="CLU_030140_0_0_6"/>
<dbReference type="UniPathway" id="UPA00244">
    <property type="reaction ID" value="UER00309"/>
</dbReference>
<dbReference type="Proteomes" id="UP000008936">
    <property type="component" value="Chromosome"/>
</dbReference>
<dbReference type="GO" id="GO:0005737">
    <property type="term" value="C:cytoplasm"/>
    <property type="evidence" value="ECO:0007669"/>
    <property type="project" value="UniProtKB-SubCell"/>
</dbReference>
<dbReference type="GO" id="GO:0048001">
    <property type="term" value="F:erythrose-4-phosphate dehydrogenase activity"/>
    <property type="evidence" value="ECO:0007669"/>
    <property type="project" value="UniProtKB-UniRule"/>
</dbReference>
<dbReference type="GO" id="GO:0051287">
    <property type="term" value="F:NAD binding"/>
    <property type="evidence" value="ECO:0007669"/>
    <property type="project" value="InterPro"/>
</dbReference>
<dbReference type="GO" id="GO:0042823">
    <property type="term" value="P:pyridoxal phosphate biosynthetic process"/>
    <property type="evidence" value="ECO:0007669"/>
    <property type="project" value="UniProtKB-UniRule"/>
</dbReference>
<dbReference type="GO" id="GO:0008615">
    <property type="term" value="P:pyridoxine biosynthetic process"/>
    <property type="evidence" value="ECO:0007669"/>
    <property type="project" value="UniProtKB-UniRule"/>
</dbReference>
<dbReference type="CDD" id="cd23937">
    <property type="entry name" value="GAPDH_C_E4PDH"/>
    <property type="match status" value="1"/>
</dbReference>
<dbReference type="CDD" id="cd17892">
    <property type="entry name" value="GAPDH_N_E4PDH"/>
    <property type="match status" value="1"/>
</dbReference>
<dbReference type="FunFam" id="3.30.360.10:FF:000007">
    <property type="entry name" value="D-erythrose-4-phosphate dehydrogenase"/>
    <property type="match status" value="1"/>
</dbReference>
<dbReference type="FunFam" id="3.40.50.720:FF:000001">
    <property type="entry name" value="Glyceraldehyde-3-phosphate dehydrogenase"/>
    <property type="match status" value="1"/>
</dbReference>
<dbReference type="Gene3D" id="3.30.360.10">
    <property type="entry name" value="Dihydrodipicolinate Reductase, domain 2"/>
    <property type="match status" value="1"/>
</dbReference>
<dbReference type="Gene3D" id="3.40.50.720">
    <property type="entry name" value="NAD(P)-binding Rossmann-like Domain"/>
    <property type="match status" value="1"/>
</dbReference>
<dbReference type="HAMAP" id="MF_01640">
    <property type="entry name" value="E4P_dehydrog"/>
    <property type="match status" value="1"/>
</dbReference>
<dbReference type="InterPro" id="IPR006422">
    <property type="entry name" value="E4P_DH_bac"/>
</dbReference>
<dbReference type="InterPro" id="IPR020831">
    <property type="entry name" value="GlycerAld/Erythrose_P_DH"/>
</dbReference>
<dbReference type="InterPro" id="IPR020830">
    <property type="entry name" value="GlycerAld_3-P_DH_AS"/>
</dbReference>
<dbReference type="InterPro" id="IPR020829">
    <property type="entry name" value="GlycerAld_3-P_DH_cat"/>
</dbReference>
<dbReference type="InterPro" id="IPR020828">
    <property type="entry name" value="GlycerAld_3-P_DH_NAD(P)-bd"/>
</dbReference>
<dbReference type="InterPro" id="IPR036291">
    <property type="entry name" value="NAD(P)-bd_dom_sf"/>
</dbReference>
<dbReference type="NCBIfam" id="TIGR01532">
    <property type="entry name" value="E4PD_g-proteo"/>
    <property type="match status" value="1"/>
</dbReference>
<dbReference type="NCBIfam" id="NF010058">
    <property type="entry name" value="PRK13535.1"/>
    <property type="match status" value="1"/>
</dbReference>
<dbReference type="PANTHER" id="PTHR43148">
    <property type="entry name" value="GLYCERALDEHYDE-3-PHOSPHATE DEHYDROGENASE 2"/>
    <property type="match status" value="1"/>
</dbReference>
<dbReference type="Pfam" id="PF02800">
    <property type="entry name" value="Gp_dh_C"/>
    <property type="match status" value="1"/>
</dbReference>
<dbReference type="Pfam" id="PF00044">
    <property type="entry name" value="Gp_dh_N"/>
    <property type="match status" value="1"/>
</dbReference>
<dbReference type="PIRSF" id="PIRSF000149">
    <property type="entry name" value="GAP_DH"/>
    <property type="match status" value="1"/>
</dbReference>
<dbReference type="PRINTS" id="PR00078">
    <property type="entry name" value="G3PDHDRGNASE"/>
</dbReference>
<dbReference type="SMART" id="SM00846">
    <property type="entry name" value="Gp_dh_N"/>
    <property type="match status" value="1"/>
</dbReference>
<dbReference type="SUPFAM" id="SSF55347">
    <property type="entry name" value="Glyceraldehyde-3-phosphate dehydrogenase-like, C-terminal domain"/>
    <property type="match status" value="1"/>
</dbReference>
<dbReference type="SUPFAM" id="SSF51735">
    <property type="entry name" value="NAD(P)-binding Rossmann-fold domains"/>
    <property type="match status" value="1"/>
</dbReference>
<dbReference type="PROSITE" id="PS00071">
    <property type="entry name" value="GAPDH"/>
    <property type="match status" value="1"/>
</dbReference>
<sequence length="338" mass="37015">MAIRIAINGFGRIGRSVLRALYESGRRAEISVVAINELASAEGMAHLLKYDSSHGRFAWDVRQECDSLYVGDDIIRLIHQSEIEQLPWSELGIDVVLDCSGVYGSREDGEAHVASGAKKVLFAHPGGHDLDATVVYGVNHQDLRAEHRIVSNASCTTNCIIPIIQLLDIAYGIESGTVTTIHSSMNDQPVIDAYHQDLRRTRAASQSIIPVDTKLAAGITRIFPKFCDRFEAISVRVPTINVTAIDLSVSVTHPVGVAEVNQLLQKAARGAFRGIVDYTELPLVSMDFNHDPHSAIVDGTQTRVSGQHLIKTLVWCDNEWGFANRMLDTTLAMAKSGF</sequence>
<accession>Q1CEY2</accession>
<accession>C4GXG3</accession>
<comment type="function">
    <text evidence="1">Catalyzes the NAD-dependent conversion of D-erythrose 4-phosphate to 4-phosphoerythronate.</text>
</comment>
<comment type="catalytic activity">
    <reaction evidence="1">
        <text>D-erythrose 4-phosphate + NAD(+) + H2O = 4-phospho-D-erythronate + NADH + 2 H(+)</text>
        <dbReference type="Rhea" id="RHEA:12056"/>
        <dbReference type="ChEBI" id="CHEBI:15377"/>
        <dbReference type="ChEBI" id="CHEBI:15378"/>
        <dbReference type="ChEBI" id="CHEBI:16897"/>
        <dbReference type="ChEBI" id="CHEBI:57540"/>
        <dbReference type="ChEBI" id="CHEBI:57945"/>
        <dbReference type="ChEBI" id="CHEBI:58766"/>
        <dbReference type="EC" id="1.2.1.72"/>
    </reaction>
</comment>
<comment type="pathway">
    <text evidence="1">Cofactor biosynthesis; pyridoxine 5'-phosphate biosynthesis; pyridoxine 5'-phosphate from D-erythrose 4-phosphate: step 1/5.</text>
</comment>
<comment type="subunit">
    <text evidence="1">Homotetramer.</text>
</comment>
<comment type="subcellular location">
    <subcellularLocation>
        <location evidence="1">Cytoplasm</location>
    </subcellularLocation>
</comment>
<comment type="similarity">
    <text evidence="1">Belongs to the glyceraldehyde-3-phosphate dehydrogenase family. Epd subfamily.</text>
</comment>